<dbReference type="EC" id="4.2.1.19" evidence="1"/>
<dbReference type="EMBL" id="AP009552">
    <property type="protein sequence ID" value="BAG05760.1"/>
    <property type="molecule type" value="Genomic_DNA"/>
</dbReference>
<dbReference type="RefSeq" id="WP_012268120.1">
    <property type="nucleotide sequence ID" value="NC_010296.1"/>
</dbReference>
<dbReference type="SMR" id="B0JJ52"/>
<dbReference type="STRING" id="449447.MAE_59380"/>
<dbReference type="PaxDb" id="449447-MAE_59380"/>
<dbReference type="EnsemblBacteria" id="BAG05760">
    <property type="protein sequence ID" value="BAG05760"/>
    <property type="gene ID" value="MAE_59380"/>
</dbReference>
<dbReference type="KEGG" id="mar:MAE_59380"/>
<dbReference type="PATRIC" id="fig|449447.4.peg.5441"/>
<dbReference type="eggNOG" id="COG0131">
    <property type="taxonomic scope" value="Bacteria"/>
</dbReference>
<dbReference type="HOGENOM" id="CLU_044308_3_0_3"/>
<dbReference type="BioCyc" id="MAER449447:MAE_RS25915-MONOMER"/>
<dbReference type="UniPathway" id="UPA00031">
    <property type="reaction ID" value="UER00011"/>
</dbReference>
<dbReference type="Proteomes" id="UP000001510">
    <property type="component" value="Chromosome"/>
</dbReference>
<dbReference type="GO" id="GO:0005737">
    <property type="term" value="C:cytoplasm"/>
    <property type="evidence" value="ECO:0007669"/>
    <property type="project" value="UniProtKB-SubCell"/>
</dbReference>
<dbReference type="GO" id="GO:0004424">
    <property type="term" value="F:imidazoleglycerol-phosphate dehydratase activity"/>
    <property type="evidence" value="ECO:0007669"/>
    <property type="project" value="UniProtKB-UniRule"/>
</dbReference>
<dbReference type="GO" id="GO:0000105">
    <property type="term" value="P:L-histidine biosynthetic process"/>
    <property type="evidence" value="ECO:0007669"/>
    <property type="project" value="UniProtKB-UniRule"/>
</dbReference>
<dbReference type="CDD" id="cd07914">
    <property type="entry name" value="IGPD"/>
    <property type="match status" value="1"/>
</dbReference>
<dbReference type="FunFam" id="3.30.230.40:FF:000002">
    <property type="entry name" value="Imidazoleglycerol-phosphate dehydratase"/>
    <property type="match status" value="1"/>
</dbReference>
<dbReference type="FunFam" id="3.30.230.40:FF:000003">
    <property type="entry name" value="Imidazoleglycerol-phosphate dehydratase HisB"/>
    <property type="match status" value="1"/>
</dbReference>
<dbReference type="Gene3D" id="3.30.230.40">
    <property type="entry name" value="Imidazole glycerol phosphate dehydratase, domain 1"/>
    <property type="match status" value="2"/>
</dbReference>
<dbReference type="HAMAP" id="MF_00076">
    <property type="entry name" value="HisB"/>
    <property type="match status" value="1"/>
</dbReference>
<dbReference type="InterPro" id="IPR038494">
    <property type="entry name" value="IGPD_sf"/>
</dbReference>
<dbReference type="InterPro" id="IPR000807">
    <property type="entry name" value="ImidazoleglycerolP_deHydtase"/>
</dbReference>
<dbReference type="InterPro" id="IPR020565">
    <property type="entry name" value="ImidazoleglycerP_deHydtase_CS"/>
</dbReference>
<dbReference type="InterPro" id="IPR020568">
    <property type="entry name" value="Ribosomal_Su5_D2-typ_SF"/>
</dbReference>
<dbReference type="NCBIfam" id="NF002106">
    <property type="entry name" value="PRK00951.1-1"/>
    <property type="match status" value="1"/>
</dbReference>
<dbReference type="NCBIfam" id="NF002108">
    <property type="entry name" value="PRK00951.1-3"/>
    <property type="match status" value="1"/>
</dbReference>
<dbReference type="NCBIfam" id="NF002111">
    <property type="entry name" value="PRK00951.2-1"/>
    <property type="match status" value="1"/>
</dbReference>
<dbReference type="NCBIfam" id="NF002114">
    <property type="entry name" value="PRK00951.2-4"/>
    <property type="match status" value="1"/>
</dbReference>
<dbReference type="PANTHER" id="PTHR23133:SF2">
    <property type="entry name" value="IMIDAZOLEGLYCEROL-PHOSPHATE DEHYDRATASE"/>
    <property type="match status" value="1"/>
</dbReference>
<dbReference type="PANTHER" id="PTHR23133">
    <property type="entry name" value="IMIDAZOLEGLYCEROL-PHOSPHATE DEHYDRATASE HIS7"/>
    <property type="match status" value="1"/>
</dbReference>
<dbReference type="Pfam" id="PF00475">
    <property type="entry name" value="IGPD"/>
    <property type="match status" value="1"/>
</dbReference>
<dbReference type="SUPFAM" id="SSF54211">
    <property type="entry name" value="Ribosomal protein S5 domain 2-like"/>
    <property type="match status" value="2"/>
</dbReference>
<dbReference type="PROSITE" id="PS00954">
    <property type="entry name" value="IGP_DEHYDRATASE_1"/>
    <property type="match status" value="1"/>
</dbReference>
<dbReference type="PROSITE" id="PS00955">
    <property type="entry name" value="IGP_DEHYDRATASE_2"/>
    <property type="match status" value="1"/>
</dbReference>
<reference key="1">
    <citation type="journal article" date="2007" name="DNA Res.">
        <title>Complete genomic structure of the bloom-forming toxic cyanobacterium Microcystis aeruginosa NIES-843.</title>
        <authorList>
            <person name="Kaneko T."/>
            <person name="Nakajima N."/>
            <person name="Okamoto S."/>
            <person name="Suzuki I."/>
            <person name="Tanabe Y."/>
            <person name="Tamaoki M."/>
            <person name="Nakamura Y."/>
            <person name="Kasai F."/>
            <person name="Watanabe A."/>
            <person name="Kawashima K."/>
            <person name="Kishida Y."/>
            <person name="Ono A."/>
            <person name="Shimizu Y."/>
            <person name="Takahashi C."/>
            <person name="Minami C."/>
            <person name="Fujishiro T."/>
            <person name="Kohara M."/>
            <person name="Katoh M."/>
            <person name="Nakazaki N."/>
            <person name="Nakayama S."/>
            <person name="Yamada M."/>
            <person name="Tabata S."/>
            <person name="Watanabe M.M."/>
        </authorList>
    </citation>
    <scope>NUCLEOTIDE SEQUENCE [LARGE SCALE GENOMIC DNA]</scope>
    <source>
        <strain>NIES-843 / IAM M-247</strain>
    </source>
</reference>
<comment type="catalytic activity">
    <reaction evidence="1">
        <text>D-erythro-1-(imidazol-4-yl)glycerol 3-phosphate = 3-(imidazol-4-yl)-2-oxopropyl phosphate + H2O</text>
        <dbReference type="Rhea" id="RHEA:11040"/>
        <dbReference type="ChEBI" id="CHEBI:15377"/>
        <dbReference type="ChEBI" id="CHEBI:57766"/>
        <dbReference type="ChEBI" id="CHEBI:58278"/>
        <dbReference type="EC" id="4.2.1.19"/>
    </reaction>
</comment>
<comment type="pathway">
    <text evidence="1">Amino-acid biosynthesis; L-histidine biosynthesis; L-histidine from 5-phospho-alpha-D-ribose 1-diphosphate: step 6/9.</text>
</comment>
<comment type="subcellular location">
    <subcellularLocation>
        <location evidence="1">Cytoplasm</location>
    </subcellularLocation>
</comment>
<comment type="similarity">
    <text evidence="1">Belongs to the imidazoleglycerol-phosphate dehydratase family.</text>
</comment>
<proteinExistence type="inferred from homology"/>
<sequence length="209" mass="22807">MISTSQIPDSFVSPCRRASVSRTTKETDVQVTIDLDGSGNCRAQTGIPFLDHMLQQIASHAAIDLDVRATGDIEIDDHHTNEDVGITLGQALLQALGDKKGIVRFGHFVAPLDEALVQVALDFSGRPHLSYGLEIPTQRVGTYDTQLVREFFVALVNHSQMTLHIRQLDGINSHHIIEATFKAFARAMSMAIAIDPRRAGIIPSSKGVL</sequence>
<organism>
    <name type="scientific">Microcystis aeruginosa (strain NIES-843 / IAM M-2473)</name>
    <dbReference type="NCBI Taxonomy" id="449447"/>
    <lineage>
        <taxon>Bacteria</taxon>
        <taxon>Bacillati</taxon>
        <taxon>Cyanobacteriota</taxon>
        <taxon>Cyanophyceae</taxon>
        <taxon>Oscillatoriophycideae</taxon>
        <taxon>Chroococcales</taxon>
        <taxon>Microcystaceae</taxon>
        <taxon>Microcystis</taxon>
    </lineage>
</organism>
<feature type="chain" id="PRO_0000336322" description="Imidazoleglycerol-phosphate dehydratase">
    <location>
        <begin position="1"/>
        <end position="209"/>
    </location>
</feature>
<protein>
    <recommendedName>
        <fullName evidence="1">Imidazoleglycerol-phosphate dehydratase</fullName>
        <shortName evidence="1">IGPD</shortName>
        <ecNumber evidence="1">4.2.1.19</ecNumber>
    </recommendedName>
</protein>
<accession>B0JJ52</accession>
<keyword id="KW-0028">Amino-acid biosynthesis</keyword>
<keyword id="KW-0963">Cytoplasm</keyword>
<keyword id="KW-0368">Histidine biosynthesis</keyword>
<keyword id="KW-0456">Lyase</keyword>
<evidence type="ECO:0000255" key="1">
    <source>
        <dbReference type="HAMAP-Rule" id="MF_00076"/>
    </source>
</evidence>
<gene>
    <name evidence="1" type="primary">hisB</name>
    <name type="ordered locus">MAE_59380</name>
</gene>
<name>HIS7_MICAN</name>